<proteinExistence type="inferred from homology"/>
<sequence length="590" mass="65885">MRTEYCGQLRLSHVGQQVTLCGWVNRRRDLGSLIFIDMRDREGIVQVFFDPDRADALKLASELRNEFCIQVTGTVRARDEKNINRDMATGEIEVLASSLTIINRADVLPLDSNHVNTEEARLKYRYLDLRRPEMAQRLKTRAKITSLVRRFMDDHGFLDIETPMLTKATPEGARDYLVPSRVHKGKFYALPQSPQLFKQLLMMSGFDRYYQIVKCFRDEDLRADRQPEFTQIDVETSFMTAPQVREVMEALVRHLWLEVKGVDLGDFPVMTFAEAERRYGSDKPDLRNPMELTDVADLLKSVEFAVFAGPANDPKGRVAALRVPGGASLTRKQIDEYGNFVKIYGAKGLAYIKVNERAKGLEGINSPVAKFLNAEIIEAILDRTAAQDGDMIFFGADNKKIVADAMGALRLKVGKDLGLTDESKWAPLWVIDFPMFEDDGEGGLTAMHHPFTSPKDMTAAELKAAPENAVANAYDMVINGYEVGGGSVRIHNGDMQQTVFGILGINEEEQREKFGFLLDALKYGTPPHAGLAFGLDRLTMLLTGTDNIRDVIAFPKTTAAACLMTEAPSFANPTALSELSIQVVKKAENN</sequence>
<name>SYD_ESCF3</name>
<feature type="chain" id="PRO_1000198990" description="Aspartate--tRNA ligase">
    <location>
        <begin position="1"/>
        <end position="590"/>
    </location>
</feature>
<feature type="region of interest" description="Aspartate" evidence="1">
    <location>
        <begin position="195"/>
        <end position="198"/>
    </location>
</feature>
<feature type="binding site" evidence="1">
    <location>
        <position position="171"/>
    </location>
    <ligand>
        <name>L-aspartate</name>
        <dbReference type="ChEBI" id="CHEBI:29991"/>
    </ligand>
</feature>
<feature type="binding site" evidence="1">
    <location>
        <begin position="217"/>
        <end position="219"/>
    </location>
    <ligand>
        <name>ATP</name>
        <dbReference type="ChEBI" id="CHEBI:30616"/>
    </ligand>
</feature>
<feature type="binding site" evidence="1">
    <location>
        <position position="217"/>
    </location>
    <ligand>
        <name>L-aspartate</name>
        <dbReference type="ChEBI" id="CHEBI:29991"/>
    </ligand>
</feature>
<feature type="binding site" evidence="1">
    <location>
        <position position="226"/>
    </location>
    <ligand>
        <name>ATP</name>
        <dbReference type="ChEBI" id="CHEBI:30616"/>
    </ligand>
</feature>
<feature type="binding site" evidence="1">
    <location>
        <position position="448"/>
    </location>
    <ligand>
        <name>L-aspartate</name>
        <dbReference type="ChEBI" id="CHEBI:29991"/>
    </ligand>
</feature>
<feature type="binding site" evidence="1">
    <location>
        <position position="482"/>
    </location>
    <ligand>
        <name>ATP</name>
        <dbReference type="ChEBI" id="CHEBI:30616"/>
    </ligand>
</feature>
<feature type="binding site" evidence="1">
    <location>
        <position position="489"/>
    </location>
    <ligand>
        <name>L-aspartate</name>
        <dbReference type="ChEBI" id="CHEBI:29991"/>
    </ligand>
</feature>
<feature type="binding site" evidence="1">
    <location>
        <begin position="534"/>
        <end position="537"/>
    </location>
    <ligand>
        <name>ATP</name>
        <dbReference type="ChEBI" id="CHEBI:30616"/>
    </ligand>
</feature>
<reference key="1">
    <citation type="journal article" date="2009" name="PLoS Genet.">
        <title>Organised genome dynamics in the Escherichia coli species results in highly diverse adaptive paths.</title>
        <authorList>
            <person name="Touchon M."/>
            <person name="Hoede C."/>
            <person name="Tenaillon O."/>
            <person name="Barbe V."/>
            <person name="Baeriswyl S."/>
            <person name="Bidet P."/>
            <person name="Bingen E."/>
            <person name="Bonacorsi S."/>
            <person name="Bouchier C."/>
            <person name="Bouvet O."/>
            <person name="Calteau A."/>
            <person name="Chiapello H."/>
            <person name="Clermont O."/>
            <person name="Cruveiller S."/>
            <person name="Danchin A."/>
            <person name="Diard M."/>
            <person name="Dossat C."/>
            <person name="Karoui M.E."/>
            <person name="Frapy E."/>
            <person name="Garry L."/>
            <person name="Ghigo J.M."/>
            <person name="Gilles A.M."/>
            <person name="Johnson J."/>
            <person name="Le Bouguenec C."/>
            <person name="Lescat M."/>
            <person name="Mangenot S."/>
            <person name="Martinez-Jehanne V."/>
            <person name="Matic I."/>
            <person name="Nassif X."/>
            <person name="Oztas S."/>
            <person name="Petit M.A."/>
            <person name="Pichon C."/>
            <person name="Rouy Z."/>
            <person name="Ruf C.S."/>
            <person name="Schneider D."/>
            <person name="Tourret J."/>
            <person name="Vacherie B."/>
            <person name="Vallenet D."/>
            <person name="Medigue C."/>
            <person name="Rocha E.P.C."/>
            <person name="Denamur E."/>
        </authorList>
    </citation>
    <scope>NUCLEOTIDE SEQUENCE [LARGE SCALE GENOMIC DNA]</scope>
    <source>
        <strain>ATCC 35469 / DSM 13698 / BCRC 15582 / CCUG 18766 / IAM 14443 / JCM 21226 / LMG 7866 / NBRC 102419 / NCTC 12128 / CDC 0568-73</strain>
    </source>
</reference>
<evidence type="ECO:0000255" key="1">
    <source>
        <dbReference type="HAMAP-Rule" id="MF_00044"/>
    </source>
</evidence>
<organism>
    <name type="scientific">Escherichia fergusonii (strain ATCC 35469 / DSM 13698 / CCUG 18766 / IAM 14443 / JCM 21226 / LMG 7866 / NBRC 102419 / NCTC 12128 / CDC 0568-73)</name>
    <dbReference type="NCBI Taxonomy" id="585054"/>
    <lineage>
        <taxon>Bacteria</taxon>
        <taxon>Pseudomonadati</taxon>
        <taxon>Pseudomonadota</taxon>
        <taxon>Gammaproteobacteria</taxon>
        <taxon>Enterobacterales</taxon>
        <taxon>Enterobacteriaceae</taxon>
        <taxon>Escherichia</taxon>
    </lineage>
</organism>
<gene>
    <name evidence="1" type="primary">aspS</name>
    <name type="ordered locus">EFER_1206</name>
</gene>
<accession>B7LPH8</accession>
<dbReference type="EC" id="6.1.1.12" evidence="1"/>
<dbReference type="EMBL" id="CU928158">
    <property type="protein sequence ID" value="CAQ88731.1"/>
    <property type="molecule type" value="Genomic_DNA"/>
</dbReference>
<dbReference type="RefSeq" id="WP_001258663.1">
    <property type="nucleotide sequence ID" value="NC_011740.1"/>
</dbReference>
<dbReference type="SMR" id="B7LPH8"/>
<dbReference type="GeneID" id="75057746"/>
<dbReference type="KEGG" id="efe:EFER_1206"/>
<dbReference type="HOGENOM" id="CLU_014330_3_2_6"/>
<dbReference type="OrthoDB" id="9802326at2"/>
<dbReference type="Proteomes" id="UP000000745">
    <property type="component" value="Chromosome"/>
</dbReference>
<dbReference type="GO" id="GO:0005737">
    <property type="term" value="C:cytoplasm"/>
    <property type="evidence" value="ECO:0007669"/>
    <property type="project" value="UniProtKB-SubCell"/>
</dbReference>
<dbReference type="GO" id="GO:0004815">
    <property type="term" value="F:aspartate-tRNA ligase activity"/>
    <property type="evidence" value="ECO:0007669"/>
    <property type="project" value="UniProtKB-UniRule"/>
</dbReference>
<dbReference type="GO" id="GO:0005524">
    <property type="term" value="F:ATP binding"/>
    <property type="evidence" value="ECO:0007669"/>
    <property type="project" value="UniProtKB-UniRule"/>
</dbReference>
<dbReference type="GO" id="GO:0003676">
    <property type="term" value="F:nucleic acid binding"/>
    <property type="evidence" value="ECO:0007669"/>
    <property type="project" value="InterPro"/>
</dbReference>
<dbReference type="GO" id="GO:0006422">
    <property type="term" value="P:aspartyl-tRNA aminoacylation"/>
    <property type="evidence" value="ECO:0007669"/>
    <property type="project" value="UniProtKB-UniRule"/>
</dbReference>
<dbReference type="CDD" id="cd00777">
    <property type="entry name" value="AspRS_core"/>
    <property type="match status" value="1"/>
</dbReference>
<dbReference type="CDD" id="cd04317">
    <property type="entry name" value="EcAspRS_like_N"/>
    <property type="match status" value="1"/>
</dbReference>
<dbReference type="FunFam" id="2.40.50.140:FF:000080">
    <property type="entry name" value="Aspartate--tRNA ligase"/>
    <property type="match status" value="1"/>
</dbReference>
<dbReference type="FunFam" id="3.30.1360.30:FF:000001">
    <property type="entry name" value="Aspartate--tRNA ligase"/>
    <property type="match status" value="1"/>
</dbReference>
<dbReference type="Gene3D" id="3.30.930.10">
    <property type="entry name" value="Bira Bifunctional Protein, Domain 2"/>
    <property type="match status" value="1"/>
</dbReference>
<dbReference type="Gene3D" id="3.30.1360.30">
    <property type="entry name" value="GAD-like domain"/>
    <property type="match status" value="1"/>
</dbReference>
<dbReference type="Gene3D" id="2.40.50.140">
    <property type="entry name" value="Nucleic acid-binding proteins"/>
    <property type="match status" value="1"/>
</dbReference>
<dbReference type="HAMAP" id="MF_00044">
    <property type="entry name" value="Asp_tRNA_synth_type1"/>
    <property type="match status" value="1"/>
</dbReference>
<dbReference type="InterPro" id="IPR004364">
    <property type="entry name" value="Aa-tRNA-synt_II"/>
</dbReference>
<dbReference type="InterPro" id="IPR006195">
    <property type="entry name" value="aa-tRNA-synth_II"/>
</dbReference>
<dbReference type="InterPro" id="IPR045864">
    <property type="entry name" value="aa-tRNA-synth_II/BPL/LPL"/>
</dbReference>
<dbReference type="InterPro" id="IPR004524">
    <property type="entry name" value="Asp-tRNA-ligase_1"/>
</dbReference>
<dbReference type="InterPro" id="IPR047089">
    <property type="entry name" value="Asp-tRNA-ligase_1_N"/>
</dbReference>
<dbReference type="InterPro" id="IPR002312">
    <property type="entry name" value="Asp/Asn-tRNA-synth_IIb"/>
</dbReference>
<dbReference type="InterPro" id="IPR047090">
    <property type="entry name" value="AspRS_core"/>
</dbReference>
<dbReference type="InterPro" id="IPR004115">
    <property type="entry name" value="GAD-like_sf"/>
</dbReference>
<dbReference type="InterPro" id="IPR029351">
    <property type="entry name" value="GAD_dom"/>
</dbReference>
<dbReference type="InterPro" id="IPR012340">
    <property type="entry name" value="NA-bd_OB-fold"/>
</dbReference>
<dbReference type="InterPro" id="IPR004365">
    <property type="entry name" value="NA-bd_OB_tRNA"/>
</dbReference>
<dbReference type="NCBIfam" id="TIGR00459">
    <property type="entry name" value="aspS_bact"/>
    <property type="match status" value="1"/>
</dbReference>
<dbReference type="NCBIfam" id="NF001750">
    <property type="entry name" value="PRK00476.1"/>
    <property type="match status" value="1"/>
</dbReference>
<dbReference type="PANTHER" id="PTHR22594:SF5">
    <property type="entry name" value="ASPARTATE--TRNA LIGASE, MITOCHONDRIAL"/>
    <property type="match status" value="1"/>
</dbReference>
<dbReference type="PANTHER" id="PTHR22594">
    <property type="entry name" value="ASPARTYL/LYSYL-TRNA SYNTHETASE"/>
    <property type="match status" value="1"/>
</dbReference>
<dbReference type="Pfam" id="PF02938">
    <property type="entry name" value="GAD"/>
    <property type="match status" value="1"/>
</dbReference>
<dbReference type="Pfam" id="PF00152">
    <property type="entry name" value="tRNA-synt_2"/>
    <property type="match status" value="1"/>
</dbReference>
<dbReference type="Pfam" id="PF01336">
    <property type="entry name" value="tRNA_anti-codon"/>
    <property type="match status" value="1"/>
</dbReference>
<dbReference type="PRINTS" id="PR01042">
    <property type="entry name" value="TRNASYNTHASP"/>
</dbReference>
<dbReference type="SUPFAM" id="SSF55681">
    <property type="entry name" value="Class II aaRS and biotin synthetases"/>
    <property type="match status" value="1"/>
</dbReference>
<dbReference type="SUPFAM" id="SSF55261">
    <property type="entry name" value="GAD domain-like"/>
    <property type="match status" value="1"/>
</dbReference>
<dbReference type="SUPFAM" id="SSF50249">
    <property type="entry name" value="Nucleic acid-binding proteins"/>
    <property type="match status" value="1"/>
</dbReference>
<dbReference type="PROSITE" id="PS50862">
    <property type="entry name" value="AA_TRNA_LIGASE_II"/>
    <property type="match status" value="1"/>
</dbReference>
<keyword id="KW-0030">Aminoacyl-tRNA synthetase</keyword>
<keyword id="KW-0067">ATP-binding</keyword>
<keyword id="KW-0963">Cytoplasm</keyword>
<keyword id="KW-0436">Ligase</keyword>
<keyword id="KW-0547">Nucleotide-binding</keyword>
<keyword id="KW-0648">Protein biosynthesis</keyword>
<protein>
    <recommendedName>
        <fullName evidence="1">Aspartate--tRNA ligase</fullName>
        <ecNumber evidence="1">6.1.1.12</ecNumber>
    </recommendedName>
    <alternativeName>
        <fullName evidence="1">Aspartyl-tRNA synthetase</fullName>
        <shortName evidence="1">AspRS</shortName>
    </alternativeName>
</protein>
<comment type="function">
    <text evidence="1">Catalyzes the attachment of L-aspartate to tRNA(Asp) in a two-step reaction: L-aspartate is first activated by ATP to form Asp-AMP and then transferred to the acceptor end of tRNA(Asp).</text>
</comment>
<comment type="catalytic activity">
    <reaction evidence="1">
        <text>tRNA(Asp) + L-aspartate + ATP = L-aspartyl-tRNA(Asp) + AMP + diphosphate</text>
        <dbReference type="Rhea" id="RHEA:19649"/>
        <dbReference type="Rhea" id="RHEA-COMP:9660"/>
        <dbReference type="Rhea" id="RHEA-COMP:9678"/>
        <dbReference type="ChEBI" id="CHEBI:29991"/>
        <dbReference type="ChEBI" id="CHEBI:30616"/>
        <dbReference type="ChEBI" id="CHEBI:33019"/>
        <dbReference type="ChEBI" id="CHEBI:78442"/>
        <dbReference type="ChEBI" id="CHEBI:78516"/>
        <dbReference type="ChEBI" id="CHEBI:456215"/>
        <dbReference type="EC" id="6.1.1.12"/>
    </reaction>
</comment>
<comment type="subunit">
    <text evidence="1">Homodimer.</text>
</comment>
<comment type="subcellular location">
    <subcellularLocation>
        <location evidence="1">Cytoplasm</location>
    </subcellularLocation>
</comment>
<comment type="similarity">
    <text evidence="1">Belongs to the class-II aminoacyl-tRNA synthetase family. Type 1 subfamily.</text>
</comment>